<feature type="chain" id="PRO_0000029743" description="Phosphatidylserine decarboxylase beta chain" evidence="1">
    <location>
        <begin position="1"/>
        <end position="254"/>
    </location>
</feature>
<feature type="chain" id="PRO_0000029744" description="Phosphatidylserine decarboxylase alpha chain" evidence="1">
    <location>
        <begin position="255"/>
        <end position="297"/>
    </location>
</feature>
<feature type="active site" description="Charge relay system; for autoendoproteolytic cleavage activity" evidence="1">
    <location>
        <position position="112"/>
    </location>
</feature>
<feature type="active site" description="Charge relay system; for autoendoproteolytic cleavage activity" evidence="1">
    <location>
        <position position="168"/>
    </location>
</feature>
<feature type="active site" description="Charge relay system; for autoendoproteolytic cleavage activity" evidence="1">
    <location>
        <position position="255"/>
    </location>
</feature>
<feature type="active site" description="Schiff-base intermediate with substrate; via pyruvic acid; for decarboxylase activity" evidence="1">
    <location>
        <position position="255"/>
    </location>
</feature>
<feature type="site" description="Cleavage (non-hydrolytic); by autocatalysis" evidence="1">
    <location>
        <begin position="254"/>
        <end position="255"/>
    </location>
</feature>
<feature type="modified residue" description="Pyruvic acid (Ser); by autocatalysis" evidence="1">
    <location>
        <position position="255"/>
    </location>
</feature>
<dbReference type="EC" id="4.1.1.65" evidence="1"/>
<dbReference type="EMBL" id="AE015927">
    <property type="protein sequence ID" value="AAO34734.1"/>
    <property type="molecule type" value="Genomic_DNA"/>
</dbReference>
<dbReference type="RefSeq" id="WP_011098407.1">
    <property type="nucleotide sequence ID" value="NC_004557.1"/>
</dbReference>
<dbReference type="SMR" id="Q899T7"/>
<dbReference type="STRING" id="212717.CTC_00080"/>
<dbReference type="GeneID" id="24253168"/>
<dbReference type="KEGG" id="ctc:CTC_00080"/>
<dbReference type="HOGENOM" id="CLU_029061_2_2_9"/>
<dbReference type="OrthoDB" id="9802030at2"/>
<dbReference type="UniPathway" id="UPA00558">
    <property type="reaction ID" value="UER00616"/>
</dbReference>
<dbReference type="Proteomes" id="UP000001412">
    <property type="component" value="Chromosome"/>
</dbReference>
<dbReference type="GO" id="GO:0005886">
    <property type="term" value="C:plasma membrane"/>
    <property type="evidence" value="ECO:0007669"/>
    <property type="project" value="UniProtKB-SubCell"/>
</dbReference>
<dbReference type="GO" id="GO:0004609">
    <property type="term" value="F:phosphatidylserine decarboxylase activity"/>
    <property type="evidence" value="ECO:0007669"/>
    <property type="project" value="UniProtKB-UniRule"/>
</dbReference>
<dbReference type="GO" id="GO:0006646">
    <property type="term" value="P:phosphatidylethanolamine biosynthetic process"/>
    <property type="evidence" value="ECO:0007669"/>
    <property type="project" value="UniProtKB-UniRule"/>
</dbReference>
<dbReference type="HAMAP" id="MF_00663">
    <property type="entry name" value="PS_decarb_PSD_B_type2"/>
    <property type="match status" value="1"/>
</dbReference>
<dbReference type="InterPro" id="IPR003817">
    <property type="entry name" value="PS_Dcarbxylase"/>
</dbReference>
<dbReference type="InterPro" id="IPR033177">
    <property type="entry name" value="PSD-B"/>
</dbReference>
<dbReference type="InterPro" id="IPR033179">
    <property type="entry name" value="PSD_type2_pro"/>
</dbReference>
<dbReference type="NCBIfam" id="NF001941">
    <property type="entry name" value="PRK00723.1"/>
    <property type="match status" value="1"/>
</dbReference>
<dbReference type="NCBIfam" id="TIGR00163">
    <property type="entry name" value="PS_decarb"/>
    <property type="match status" value="1"/>
</dbReference>
<dbReference type="PANTHER" id="PTHR10067">
    <property type="entry name" value="PHOSPHATIDYLSERINE DECARBOXYLASE"/>
    <property type="match status" value="1"/>
</dbReference>
<dbReference type="PANTHER" id="PTHR10067:SF17">
    <property type="entry name" value="PHOSPHATIDYLSERINE DECARBOXYLASE PROENZYME 2"/>
    <property type="match status" value="1"/>
</dbReference>
<dbReference type="Pfam" id="PF02666">
    <property type="entry name" value="PS_Dcarbxylase"/>
    <property type="match status" value="1"/>
</dbReference>
<organism>
    <name type="scientific">Clostridium tetani (strain Massachusetts / E88)</name>
    <dbReference type="NCBI Taxonomy" id="212717"/>
    <lineage>
        <taxon>Bacteria</taxon>
        <taxon>Bacillati</taxon>
        <taxon>Bacillota</taxon>
        <taxon>Clostridia</taxon>
        <taxon>Eubacteriales</taxon>
        <taxon>Clostridiaceae</taxon>
        <taxon>Clostridium</taxon>
    </lineage>
</organism>
<proteinExistence type="inferred from homology"/>
<name>PSD_CLOTE</name>
<accession>Q899T7</accession>
<gene>
    <name evidence="1" type="primary">psd</name>
    <name type="ordered locus">CTC_00080</name>
</gene>
<evidence type="ECO:0000255" key="1">
    <source>
        <dbReference type="HAMAP-Rule" id="MF_00663"/>
    </source>
</evidence>
<protein>
    <recommendedName>
        <fullName evidence="1">Phosphatidylserine decarboxylase proenzyme</fullName>
        <ecNumber evidence="1">4.1.1.65</ecNumber>
    </recommendedName>
    <component>
        <recommendedName>
            <fullName evidence="1">Phosphatidylserine decarboxylase alpha chain</fullName>
        </recommendedName>
    </component>
    <component>
        <recommendedName>
            <fullName evidence="1">Phosphatidylserine decarboxylase beta chain</fullName>
        </recommendedName>
    </component>
</protein>
<reference key="1">
    <citation type="journal article" date="2003" name="Proc. Natl. Acad. Sci. U.S.A.">
        <title>The genome sequence of Clostridium tetani, the causative agent of tetanus disease.</title>
        <authorList>
            <person name="Brueggemann H."/>
            <person name="Baeumer S."/>
            <person name="Fricke W.F."/>
            <person name="Wiezer A."/>
            <person name="Liesegang H."/>
            <person name="Decker I."/>
            <person name="Herzberg C."/>
            <person name="Martinez-Arias R."/>
            <person name="Merkl R."/>
            <person name="Henne A."/>
            <person name="Gottschalk G."/>
        </authorList>
    </citation>
    <scope>NUCLEOTIDE SEQUENCE [LARGE SCALE GENOMIC DNA]</scope>
    <source>
        <strain>Massachusetts / E88</strain>
    </source>
</reference>
<keyword id="KW-1003">Cell membrane</keyword>
<keyword id="KW-0210">Decarboxylase</keyword>
<keyword id="KW-0444">Lipid biosynthesis</keyword>
<keyword id="KW-0443">Lipid metabolism</keyword>
<keyword id="KW-0456">Lyase</keyword>
<keyword id="KW-0472">Membrane</keyword>
<keyword id="KW-0594">Phospholipid biosynthesis</keyword>
<keyword id="KW-1208">Phospholipid metabolism</keyword>
<keyword id="KW-0670">Pyruvate</keyword>
<keyword id="KW-1185">Reference proteome</keyword>
<keyword id="KW-0865">Zymogen</keyword>
<comment type="function">
    <text evidence="1">Catalyzes the formation of phosphatidylethanolamine (PtdEtn) from phosphatidylserine (PtdSer).</text>
</comment>
<comment type="catalytic activity">
    <reaction evidence="1">
        <text>a 1,2-diacyl-sn-glycero-3-phospho-L-serine + H(+) = a 1,2-diacyl-sn-glycero-3-phosphoethanolamine + CO2</text>
        <dbReference type="Rhea" id="RHEA:20828"/>
        <dbReference type="ChEBI" id="CHEBI:15378"/>
        <dbReference type="ChEBI" id="CHEBI:16526"/>
        <dbReference type="ChEBI" id="CHEBI:57262"/>
        <dbReference type="ChEBI" id="CHEBI:64612"/>
        <dbReference type="EC" id="4.1.1.65"/>
    </reaction>
</comment>
<comment type="cofactor">
    <cofactor evidence="1">
        <name>pyruvate</name>
        <dbReference type="ChEBI" id="CHEBI:15361"/>
    </cofactor>
    <text evidence="1">Binds 1 pyruvoyl group covalently per subunit.</text>
</comment>
<comment type="pathway">
    <text evidence="1">Phospholipid metabolism; phosphatidylethanolamine biosynthesis; phosphatidylethanolamine from CDP-diacylglycerol: step 2/2.</text>
</comment>
<comment type="subunit">
    <text evidence="1">Heterodimer of a large membrane-associated beta subunit and a small pyruvoyl-containing alpha subunit.</text>
</comment>
<comment type="subcellular location">
    <subcellularLocation>
        <location evidence="1">Cell membrane</location>
        <topology evidence="1">Peripheral membrane protein</topology>
    </subcellularLocation>
</comment>
<comment type="PTM">
    <text evidence="1">Is synthesized initially as an inactive proenzyme. Formation of the active enzyme involves a self-maturation process in which the active site pyruvoyl group is generated from an internal serine residue via an autocatalytic post-translational modification. Two non-identical subunits are generated from the proenzyme in this reaction, and the pyruvate is formed at the N-terminus of the alpha chain, which is derived from the carboxyl end of the proenzyme. The autoendoproteolytic cleavage occurs by a canonical serine protease mechanism, in which the side chain hydroxyl group of the serine supplies its oxygen atom to form the C-terminus of the beta chain, while the remainder of the serine residue undergoes an oxidative deamination to produce ammonia and the pyruvoyl prosthetic group on the alpha chain. During this reaction, the Ser that is part of the protease active site of the proenzyme becomes the pyruvoyl prosthetic group, which constitutes an essential element of the active site of the mature decarboxylase.</text>
</comment>
<comment type="similarity">
    <text evidence="1">Belongs to the phosphatidylserine decarboxylase family. PSD-B subfamily. Prokaryotic type II sub-subfamily.</text>
</comment>
<sequence>MIKFYNRKTKSYEIEKISGEKLLNWLYNSKNINFLDIVTKKKFFSYIYGQYCDSKLSTLKIKSFVNNFNIDMNESLKSIGEFNSFNDFFTRKLKSNSRTIYGNKNILISPADSKVLAFENIDINKIIQVKGSNYSFKELLNSDKLCEQYKNGSCIIFRLCPTDYHRFHFIDSGICTKTNKINGYYYSVNPIALEKIPSLFCKNKREWSILKSNNFGDILYMEVGATCVGTIVQTYTANKEVSKGQEKGYFKFGGSTVILFFEKNKVSIDKDILMQSNLGYETKVLIGDKIGKKFCSK</sequence>